<comment type="function">
    <text evidence="1">One of several proteins that assist in the late maturation steps of the functional core of the 30S ribosomal subunit. Associates with free 30S ribosomal subunits (but not with 30S subunits that are part of 70S ribosomes or polysomes). Required for efficient processing of 16S rRNA. May interact with the 5'-terminal helix region of 16S rRNA.</text>
</comment>
<comment type="subunit">
    <text evidence="1">Monomer. Binds 30S ribosomal subunits, but not 50S ribosomal subunits or 70S ribosomes.</text>
</comment>
<comment type="subcellular location">
    <subcellularLocation>
        <location evidence="1">Cytoplasm</location>
    </subcellularLocation>
</comment>
<comment type="similarity">
    <text evidence="1">Belongs to the RbfA family.</text>
</comment>
<comment type="sequence caution" evidence="2">
    <conflict type="erroneous initiation">
        <sequence resource="EMBL-CDS" id="ABP93005"/>
    </conflict>
    <text>Extended N-terminus.</text>
</comment>
<sequence>MANHFRTDRVGMEIKREVNEILQKKVRDPRVQGVTITDVQMVGDLSTAKVYYTIMSNLASDNQKAQTGLEKATGTIKRELGRKLTLYKIPDLVFEKDQSIEYGNKIDQMLRALDQKD</sequence>
<organism>
    <name type="scientific">Streptococcus suis (strain 98HAH33)</name>
    <dbReference type="NCBI Taxonomy" id="391296"/>
    <lineage>
        <taxon>Bacteria</taxon>
        <taxon>Bacillati</taxon>
        <taxon>Bacillota</taxon>
        <taxon>Bacilli</taxon>
        <taxon>Lactobacillales</taxon>
        <taxon>Streptococcaceae</taxon>
        <taxon>Streptococcus</taxon>
    </lineage>
</organism>
<protein>
    <recommendedName>
        <fullName evidence="1">Ribosome-binding factor A</fullName>
    </recommendedName>
</protein>
<evidence type="ECO:0000255" key="1">
    <source>
        <dbReference type="HAMAP-Rule" id="MF_00003"/>
    </source>
</evidence>
<evidence type="ECO:0000305" key="2"/>
<keyword id="KW-0963">Cytoplasm</keyword>
<keyword id="KW-0690">Ribosome biogenesis</keyword>
<gene>
    <name evidence="1" type="primary">rbfA</name>
    <name type="ordered locus">SSU98_1847</name>
</gene>
<proteinExistence type="inferred from homology"/>
<dbReference type="EMBL" id="CP000408">
    <property type="protein sequence ID" value="ABP93005.1"/>
    <property type="status" value="ALT_INIT"/>
    <property type="molecule type" value="Genomic_DNA"/>
</dbReference>
<dbReference type="SMR" id="A4W3R6"/>
<dbReference type="KEGG" id="ssv:SSU98_1847"/>
<dbReference type="HOGENOM" id="CLU_089475_3_0_9"/>
<dbReference type="GO" id="GO:0005829">
    <property type="term" value="C:cytosol"/>
    <property type="evidence" value="ECO:0007669"/>
    <property type="project" value="TreeGrafter"/>
</dbReference>
<dbReference type="GO" id="GO:0043024">
    <property type="term" value="F:ribosomal small subunit binding"/>
    <property type="evidence" value="ECO:0007669"/>
    <property type="project" value="TreeGrafter"/>
</dbReference>
<dbReference type="GO" id="GO:0030490">
    <property type="term" value="P:maturation of SSU-rRNA"/>
    <property type="evidence" value="ECO:0007669"/>
    <property type="project" value="UniProtKB-UniRule"/>
</dbReference>
<dbReference type="Gene3D" id="3.30.300.20">
    <property type="match status" value="1"/>
</dbReference>
<dbReference type="HAMAP" id="MF_00003">
    <property type="entry name" value="RbfA"/>
    <property type="match status" value="1"/>
</dbReference>
<dbReference type="InterPro" id="IPR015946">
    <property type="entry name" value="KH_dom-like_a/b"/>
</dbReference>
<dbReference type="InterPro" id="IPR000238">
    <property type="entry name" value="RbfA"/>
</dbReference>
<dbReference type="InterPro" id="IPR023799">
    <property type="entry name" value="RbfA_dom_sf"/>
</dbReference>
<dbReference type="InterPro" id="IPR020053">
    <property type="entry name" value="Ribosome-bd_factorA_CS"/>
</dbReference>
<dbReference type="NCBIfam" id="TIGR00082">
    <property type="entry name" value="rbfA"/>
    <property type="match status" value="1"/>
</dbReference>
<dbReference type="PANTHER" id="PTHR33515">
    <property type="entry name" value="RIBOSOME-BINDING FACTOR A, CHLOROPLASTIC-RELATED"/>
    <property type="match status" value="1"/>
</dbReference>
<dbReference type="PANTHER" id="PTHR33515:SF1">
    <property type="entry name" value="RIBOSOME-BINDING FACTOR A, CHLOROPLASTIC-RELATED"/>
    <property type="match status" value="1"/>
</dbReference>
<dbReference type="Pfam" id="PF02033">
    <property type="entry name" value="RBFA"/>
    <property type="match status" value="1"/>
</dbReference>
<dbReference type="SUPFAM" id="SSF89919">
    <property type="entry name" value="Ribosome-binding factor A, RbfA"/>
    <property type="match status" value="1"/>
</dbReference>
<dbReference type="PROSITE" id="PS01319">
    <property type="entry name" value="RBFA"/>
    <property type="match status" value="1"/>
</dbReference>
<feature type="chain" id="PRO_0000321262" description="Ribosome-binding factor A">
    <location>
        <begin position="1"/>
        <end position="117"/>
    </location>
</feature>
<reference key="1">
    <citation type="journal article" date="2007" name="PLoS ONE">
        <title>A glimpse of streptococcal toxic shock syndrome from comparative genomics of S. suis 2 Chinese isolates.</title>
        <authorList>
            <person name="Chen C."/>
            <person name="Tang J."/>
            <person name="Dong W."/>
            <person name="Wang C."/>
            <person name="Feng Y."/>
            <person name="Wang J."/>
            <person name="Zheng F."/>
            <person name="Pan X."/>
            <person name="Liu D."/>
            <person name="Li M."/>
            <person name="Song Y."/>
            <person name="Zhu X."/>
            <person name="Sun H."/>
            <person name="Feng T."/>
            <person name="Guo Z."/>
            <person name="Ju A."/>
            <person name="Ge J."/>
            <person name="Dong Y."/>
            <person name="Sun W."/>
            <person name="Jiang Y."/>
            <person name="Wang J."/>
            <person name="Yan J."/>
            <person name="Yang H."/>
            <person name="Wang X."/>
            <person name="Gao G.F."/>
            <person name="Yang R."/>
            <person name="Wang J."/>
            <person name="Yu J."/>
        </authorList>
    </citation>
    <scope>NUCLEOTIDE SEQUENCE [LARGE SCALE GENOMIC DNA]</scope>
    <source>
        <strain>98HAH33</strain>
    </source>
</reference>
<accession>A4W3R6</accession>
<name>RBFA_STRS2</name>